<organism>
    <name type="scientific">Salmonella heidelberg (strain SL476)</name>
    <dbReference type="NCBI Taxonomy" id="454169"/>
    <lineage>
        <taxon>Bacteria</taxon>
        <taxon>Pseudomonadati</taxon>
        <taxon>Pseudomonadota</taxon>
        <taxon>Gammaproteobacteria</taxon>
        <taxon>Enterobacterales</taxon>
        <taxon>Enterobacteriaceae</taxon>
        <taxon>Salmonella</taxon>
    </lineage>
</organism>
<comment type="function">
    <text evidence="1">A GTPase-activating protein (GAP) that modifies Der/EngA GTPase function. May play a role in ribosome biogenesis.</text>
</comment>
<comment type="subunit">
    <text evidence="1">Interacts with Der.</text>
</comment>
<comment type="similarity">
    <text evidence="1">Belongs to the YihI family.</text>
</comment>
<keyword id="KW-0343">GTPase activation</keyword>
<keyword id="KW-0690">Ribosome biogenesis</keyword>
<feature type="chain" id="PRO_1000136391" description="Der GTPase-activating protein YihI">
    <location>
        <begin position="1"/>
        <end position="171"/>
    </location>
</feature>
<feature type="region of interest" description="Disordered" evidence="2">
    <location>
        <begin position="1"/>
        <end position="99"/>
    </location>
</feature>
<feature type="region of interest" description="Disordered" evidence="2">
    <location>
        <begin position="145"/>
        <end position="171"/>
    </location>
</feature>
<feature type="compositionally biased region" description="Basic and acidic residues" evidence="2">
    <location>
        <begin position="20"/>
        <end position="30"/>
    </location>
</feature>
<feature type="compositionally biased region" description="Basic residues" evidence="2">
    <location>
        <begin position="31"/>
        <end position="40"/>
    </location>
</feature>
<feature type="compositionally biased region" description="Acidic residues" evidence="2">
    <location>
        <begin position="147"/>
        <end position="160"/>
    </location>
</feature>
<accession>B4TBT9</accession>
<reference key="1">
    <citation type="journal article" date="2011" name="J. Bacteriol.">
        <title>Comparative genomics of 28 Salmonella enterica isolates: evidence for CRISPR-mediated adaptive sublineage evolution.</title>
        <authorList>
            <person name="Fricke W.F."/>
            <person name="Mammel M.K."/>
            <person name="McDermott P.F."/>
            <person name="Tartera C."/>
            <person name="White D.G."/>
            <person name="Leclerc J.E."/>
            <person name="Ravel J."/>
            <person name="Cebula T.A."/>
        </authorList>
    </citation>
    <scope>NUCLEOTIDE SEQUENCE [LARGE SCALE GENOMIC DNA]</scope>
    <source>
        <strain>SL476</strain>
    </source>
</reference>
<gene>
    <name evidence="1" type="primary">yihI</name>
    <name type="ordered locus">SeHA_C4331</name>
</gene>
<sequence length="171" mass="19213">MKKPTSAPRSKAFGKQRRKTREELNQEARDRKRLKKHRGHAPGSRAAGGNSASGGGNQNQQKDPRIGSKTPVPLGVTEKVTQQHKPKSEKPMLSPQAELDLLETDERLDALLERLEAGETLSAEDQAWVDAKLDRIDELMQKLGLSYDDDEEDDEEDEKQEDMMRLLRGGN</sequence>
<protein>
    <recommendedName>
        <fullName evidence="1">Der GTPase-activating protein YihI</fullName>
    </recommendedName>
</protein>
<proteinExistence type="inferred from homology"/>
<name>YIHI_SALHS</name>
<evidence type="ECO:0000255" key="1">
    <source>
        <dbReference type="HAMAP-Rule" id="MF_01058"/>
    </source>
</evidence>
<evidence type="ECO:0000256" key="2">
    <source>
        <dbReference type="SAM" id="MobiDB-lite"/>
    </source>
</evidence>
<dbReference type="EMBL" id="CP001120">
    <property type="protein sequence ID" value="ACF69908.1"/>
    <property type="molecule type" value="Genomic_DNA"/>
</dbReference>
<dbReference type="RefSeq" id="WP_000743292.1">
    <property type="nucleotide sequence ID" value="NC_011083.1"/>
</dbReference>
<dbReference type="SMR" id="B4TBT9"/>
<dbReference type="KEGG" id="seh:SeHA_C4331"/>
<dbReference type="HOGENOM" id="CLU_094104_2_0_6"/>
<dbReference type="Proteomes" id="UP000001866">
    <property type="component" value="Chromosome"/>
</dbReference>
<dbReference type="GO" id="GO:0005096">
    <property type="term" value="F:GTPase activator activity"/>
    <property type="evidence" value="ECO:0007669"/>
    <property type="project" value="UniProtKB-KW"/>
</dbReference>
<dbReference type="GO" id="GO:0042254">
    <property type="term" value="P:ribosome biogenesis"/>
    <property type="evidence" value="ECO:0007669"/>
    <property type="project" value="UniProtKB-KW"/>
</dbReference>
<dbReference type="HAMAP" id="MF_01058">
    <property type="entry name" value="GAP_YihI"/>
    <property type="match status" value="1"/>
</dbReference>
<dbReference type="InterPro" id="IPR007336">
    <property type="entry name" value="YihI"/>
</dbReference>
<dbReference type="NCBIfam" id="NF003560">
    <property type="entry name" value="PRK05244.1-1"/>
    <property type="match status" value="1"/>
</dbReference>
<dbReference type="Pfam" id="PF04220">
    <property type="entry name" value="YihI"/>
    <property type="match status" value="1"/>
</dbReference>